<accession>P57947</accession>
<comment type="function">
    <text evidence="1">Necessary for normal cell division and for the maintenance of normal septation.</text>
</comment>
<comment type="cofactor">
    <cofactor evidence="1">
        <name>Mg(2+)</name>
        <dbReference type="ChEBI" id="CHEBI:18420"/>
    </cofactor>
</comment>
<comment type="similarity">
    <text evidence="1">Belongs to the TRAFAC class TrmE-Era-EngA-EngB-Septin-like GTPase superfamily. EngB GTPase family.</text>
</comment>
<feature type="chain" id="PRO_0000157769" description="Probable GTP-binding protein EngB">
    <location>
        <begin position="1"/>
        <end position="205"/>
    </location>
</feature>
<feature type="domain" description="EngB-type G" evidence="1">
    <location>
        <begin position="27"/>
        <end position="201"/>
    </location>
</feature>
<feature type="binding site" evidence="1">
    <location>
        <begin position="35"/>
        <end position="42"/>
    </location>
    <ligand>
        <name>GTP</name>
        <dbReference type="ChEBI" id="CHEBI:37565"/>
    </ligand>
</feature>
<feature type="binding site" evidence="1">
    <location>
        <position position="42"/>
    </location>
    <ligand>
        <name>Mg(2+)</name>
        <dbReference type="ChEBI" id="CHEBI:18420"/>
    </ligand>
</feature>
<feature type="binding site" evidence="1">
    <location>
        <begin position="62"/>
        <end position="66"/>
    </location>
    <ligand>
        <name>GTP</name>
        <dbReference type="ChEBI" id="CHEBI:37565"/>
    </ligand>
</feature>
<feature type="binding site" evidence="1">
    <location>
        <position position="64"/>
    </location>
    <ligand>
        <name>Mg(2+)</name>
        <dbReference type="ChEBI" id="CHEBI:18420"/>
    </ligand>
</feature>
<feature type="binding site" evidence="1">
    <location>
        <begin position="80"/>
        <end position="83"/>
    </location>
    <ligand>
        <name>GTP</name>
        <dbReference type="ChEBI" id="CHEBI:37565"/>
    </ligand>
</feature>
<feature type="binding site" evidence="1">
    <location>
        <begin position="147"/>
        <end position="150"/>
    </location>
    <ligand>
        <name>GTP</name>
        <dbReference type="ChEBI" id="CHEBI:37565"/>
    </ligand>
</feature>
<feature type="binding site" evidence="1">
    <location>
        <begin position="180"/>
        <end position="182"/>
    </location>
    <ligand>
        <name>GTP</name>
        <dbReference type="ChEBI" id="CHEBI:37565"/>
    </ligand>
</feature>
<evidence type="ECO:0000255" key="1">
    <source>
        <dbReference type="HAMAP-Rule" id="MF_00321"/>
    </source>
</evidence>
<name>ENGB_PASMU</name>
<protein>
    <recommendedName>
        <fullName evidence="1">Probable GTP-binding protein EngB</fullName>
    </recommendedName>
</protein>
<reference key="1">
    <citation type="journal article" date="2001" name="Proc. Natl. Acad. Sci. U.S.A.">
        <title>Complete genomic sequence of Pasteurella multocida Pm70.</title>
        <authorList>
            <person name="May B.J."/>
            <person name="Zhang Q."/>
            <person name="Li L.L."/>
            <person name="Paustian M.L."/>
            <person name="Whittam T.S."/>
            <person name="Kapur V."/>
        </authorList>
    </citation>
    <scope>NUCLEOTIDE SEQUENCE [LARGE SCALE GENOMIC DNA]</scope>
    <source>
        <strain>Pm70</strain>
    </source>
</reference>
<gene>
    <name evidence="1" type="primary">engB</name>
    <name type="ordered locus">PM1511</name>
</gene>
<dbReference type="EMBL" id="AE004439">
    <property type="protein sequence ID" value="AAK03595.1"/>
    <property type="molecule type" value="Genomic_DNA"/>
</dbReference>
<dbReference type="SMR" id="P57947"/>
<dbReference type="STRING" id="272843.PM1511"/>
<dbReference type="EnsemblBacteria" id="AAK03595">
    <property type="protein sequence ID" value="AAK03595"/>
    <property type="gene ID" value="PM1511"/>
</dbReference>
<dbReference type="KEGG" id="pmu:PM1511"/>
<dbReference type="HOGENOM" id="CLU_033732_1_0_6"/>
<dbReference type="OrthoDB" id="9804921at2"/>
<dbReference type="Proteomes" id="UP000000809">
    <property type="component" value="Chromosome"/>
</dbReference>
<dbReference type="GO" id="GO:0005829">
    <property type="term" value="C:cytosol"/>
    <property type="evidence" value="ECO:0007669"/>
    <property type="project" value="TreeGrafter"/>
</dbReference>
<dbReference type="GO" id="GO:0005525">
    <property type="term" value="F:GTP binding"/>
    <property type="evidence" value="ECO:0007669"/>
    <property type="project" value="UniProtKB-UniRule"/>
</dbReference>
<dbReference type="GO" id="GO:0046872">
    <property type="term" value="F:metal ion binding"/>
    <property type="evidence" value="ECO:0007669"/>
    <property type="project" value="UniProtKB-KW"/>
</dbReference>
<dbReference type="GO" id="GO:0000917">
    <property type="term" value="P:division septum assembly"/>
    <property type="evidence" value="ECO:0007669"/>
    <property type="project" value="UniProtKB-KW"/>
</dbReference>
<dbReference type="CDD" id="cd01876">
    <property type="entry name" value="YihA_EngB"/>
    <property type="match status" value="1"/>
</dbReference>
<dbReference type="FunFam" id="3.40.50.300:FF:000098">
    <property type="entry name" value="Probable GTP-binding protein EngB"/>
    <property type="match status" value="1"/>
</dbReference>
<dbReference type="Gene3D" id="3.40.50.300">
    <property type="entry name" value="P-loop containing nucleotide triphosphate hydrolases"/>
    <property type="match status" value="1"/>
</dbReference>
<dbReference type="HAMAP" id="MF_00321">
    <property type="entry name" value="GTPase_EngB"/>
    <property type="match status" value="1"/>
</dbReference>
<dbReference type="InterPro" id="IPR030393">
    <property type="entry name" value="G_ENGB_dom"/>
</dbReference>
<dbReference type="InterPro" id="IPR006073">
    <property type="entry name" value="GTP-bd"/>
</dbReference>
<dbReference type="InterPro" id="IPR019987">
    <property type="entry name" value="GTP-bd_ribosome_bio_YsxC"/>
</dbReference>
<dbReference type="InterPro" id="IPR027417">
    <property type="entry name" value="P-loop_NTPase"/>
</dbReference>
<dbReference type="NCBIfam" id="TIGR03598">
    <property type="entry name" value="GTPase_YsxC"/>
    <property type="match status" value="1"/>
</dbReference>
<dbReference type="PANTHER" id="PTHR11649:SF13">
    <property type="entry name" value="ENGB-TYPE G DOMAIN-CONTAINING PROTEIN"/>
    <property type="match status" value="1"/>
</dbReference>
<dbReference type="PANTHER" id="PTHR11649">
    <property type="entry name" value="MSS1/TRME-RELATED GTP-BINDING PROTEIN"/>
    <property type="match status" value="1"/>
</dbReference>
<dbReference type="Pfam" id="PF01926">
    <property type="entry name" value="MMR_HSR1"/>
    <property type="match status" value="1"/>
</dbReference>
<dbReference type="SUPFAM" id="SSF52540">
    <property type="entry name" value="P-loop containing nucleoside triphosphate hydrolases"/>
    <property type="match status" value="1"/>
</dbReference>
<dbReference type="PROSITE" id="PS51706">
    <property type="entry name" value="G_ENGB"/>
    <property type="match status" value="1"/>
</dbReference>
<proteinExistence type="inferred from homology"/>
<keyword id="KW-0131">Cell cycle</keyword>
<keyword id="KW-0132">Cell division</keyword>
<keyword id="KW-0342">GTP-binding</keyword>
<keyword id="KW-0460">Magnesium</keyword>
<keyword id="KW-0479">Metal-binding</keyword>
<keyword id="KW-0547">Nucleotide-binding</keyword>
<keyword id="KW-1185">Reference proteome</keyword>
<keyword id="KW-0717">Septation</keyword>
<sequence>MSDIKLNYHKTHFLTSAPDIRALPEDSGIEIAFAGRSNAGKSTALNALTNQKSLARTSKTPGRTQLINLFEVEPQCRLVDLPGYGYAAVPEQMKIQWQKALGEYLQKRQCLAGVVILMDIRHPLKDLDQQMIEWAVASELPVLLLLTKADKLSQSARSKQVKMVREAILPFQGDVQVEAFSALNKTGIDRLAAKLDSWFAPVLSE</sequence>
<organism>
    <name type="scientific">Pasteurella multocida (strain Pm70)</name>
    <dbReference type="NCBI Taxonomy" id="272843"/>
    <lineage>
        <taxon>Bacteria</taxon>
        <taxon>Pseudomonadati</taxon>
        <taxon>Pseudomonadota</taxon>
        <taxon>Gammaproteobacteria</taxon>
        <taxon>Pasteurellales</taxon>
        <taxon>Pasteurellaceae</taxon>
        <taxon>Pasteurella</taxon>
    </lineage>
</organism>